<gene>
    <name type="primary">CRK29</name>
    <name type="ordered locus">At4g21410</name>
    <name type="ORF">F18E5.30</name>
    <name type="ORF">T6K22.140</name>
</gene>
<reference key="1">
    <citation type="journal article" date="1999" name="Nature">
        <title>Sequence and analysis of chromosome 4 of the plant Arabidopsis thaliana.</title>
        <authorList>
            <person name="Mayer K.F.X."/>
            <person name="Schueller C."/>
            <person name="Wambutt R."/>
            <person name="Murphy G."/>
            <person name="Volckaert G."/>
            <person name="Pohl T."/>
            <person name="Duesterhoeft A."/>
            <person name="Stiekema W."/>
            <person name="Entian K.-D."/>
            <person name="Terryn N."/>
            <person name="Harris B."/>
            <person name="Ansorge W."/>
            <person name="Brandt P."/>
            <person name="Grivell L.A."/>
            <person name="Rieger M."/>
            <person name="Weichselgartner M."/>
            <person name="de Simone V."/>
            <person name="Obermaier B."/>
            <person name="Mache R."/>
            <person name="Mueller M."/>
            <person name="Kreis M."/>
            <person name="Delseny M."/>
            <person name="Puigdomenech P."/>
            <person name="Watson M."/>
            <person name="Schmidtheini T."/>
            <person name="Reichert B."/>
            <person name="Portetelle D."/>
            <person name="Perez-Alonso M."/>
            <person name="Boutry M."/>
            <person name="Bancroft I."/>
            <person name="Vos P."/>
            <person name="Hoheisel J."/>
            <person name="Zimmermann W."/>
            <person name="Wedler H."/>
            <person name="Ridley P."/>
            <person name="Langham S.-A."/>
            <person name="McCullagh B."/>
            <person name="Bilham L."/>
            <person name="Robben J."/>
            <person name="van der Schueren J."/>
            <person name="Grymonprez B."/>
            <person name="Chuang Y.-J."/>
            <person name="Vandenbussche F."/>
            <person name="Braeken M."/>
            <person name="Weltjens I."/>
            <person name="Voet M."/>
            <person name="Bastiaens I."/>
            <person name="Aert R."/>
            <person name="Defoor E."/>
            <person name="Weitzenegger T."/>
            <person name="Bothe G."/>
            <person name="Ramsperger U."/>
            <person name="Hilbert H."/>
            <person name="Braun M."/>
            <person name="Holzer E."/>
            <person name="Brandt A."/>
            <person name="Peters S."/>
            <person name="van Staveren M."/>
            <person name="Dirkse W."/>
            <person name="Mooijman P."/>
            <person name="Klein Lankhorst R."/>
            <person name="Rose M."/>
            <person name="Hauf J."/>
            <person name="Koetter P."/>
            <person name="Berneiser S."/>
            <person name="Hempel S."/>
            <person name="Feldpausch M."/>
            <person name="Lamberth S."/>
            <person name="Van den Daele H."/>
            <person name="De Keyser A."/>
            <person name="Buysshaert C."/>
            <person name="Gielen J."/>
            <person name="Villarroel R."/>
            <person name="De Clercq R."/>
            <person name="van Montagu M."/>
            <person name="Rogers J."/>
            <person name="Cronin A."/>
            <person name="Quail M.A."/>
            <person name="Bray-Allen S."/>
            <person name="Clark L."/>
            <person name="Doggett J."/>
            <person name="Hall S."/>
            <person name="Kay M."/>
            <person name="Lennard N."/>
            <person name="McLay K."/>
            <person name="Mayes R."/>
            <person name="Pettett A."/>
            <person name="Rajandream M.A."/>
            <person name="Lyne M."/>
            <person name="Benes V."/>
            <person name="Rechmann S."/>
            <person name="Borkova D."/>
            <person name="Bloecker H."/>
            <person name="Scharfe M."/>
            <person name="Grimm M."/>
            <person name="Loehnert T.-H."/>
            <person name="Dose S."/>
            <person name="de Haan M."/>
            <person name="Maarse A.C."/>
            <person name="Schaefer M."/>
            <person name="Mueller-Auer S."/>
            <person name="Gabel C."/>
            <person name="Fuchs M."/>
            <person name="Fartmann B."/>
            <person name="Granderath K."/>
            <person name="Dauner D."/>
            <person name="Herzl A."/>
            <person name="Neumann S."/>
            <person name="Argiriou A."/>
            <person name="Vitale D."/>
            <person name="Liguori R."/>
            <person name="Piravandi E."/>
            <person name="Massenet O."/>
            <person name="Quigley F."/>
            <person name="Clabauld G."/>
            <person name="Muendlein A."/>
            <person name="Felber R."/>
            <person name="Schnabl S."/>
            <person name="Hiller R."/>
            <person name="Schmidt W."/>
            <person name="Lecharny A."/>
            <person name="Aubourg S."/>
            <person name="Chefdor F."/>
            <person name="Cooke R."/>
            <person name="Berger C."/>
            <person name="Monfort A."/>
            <person name="Casacuberta E."/>
            <person name="Gibbons T."/>
            <person name="Weber N."/>
            <person name="Vandenbol M."/>
            <person name="Bargues M."/>
            <person name="Terol J."/>
            <person name="Torres A."/>
            <person name="Perez-Perez A."/>
            <person name="Purnelle B."/>
            <person name="Bent E."/>
            <person name="Johnson S."/>
            <person name="Tacon D."/>
            <person name="Jesse T."/>
            <person name="Heijnen L."/>
            <person name="Schwarz S."/>
            <person name="Scholler P."/>
            <person name="Heber S."/>
            <person name="Francs P."/>
            <person name="Bielke C."/>
            <person name="Frishman D."/>
            <person name="Haase D."/>
            <person name="Lemcke K."/>
            <person name="Mewes H.-W."/>
            <person name="Stocker S."/>
            <person name="Zaccaria P."/>
            <person name="Bevan M."/>
            <person name="Wilson R.K."/>
            <person name="de la Bastide M."/>
            <person name="Habermann K."/>
            <person name="Parnell L."/>
            <person name="Dedhia N."/>
            <person name="Gnoj L."/>
            <person name="Schutz K."/>
            <person name="Huang E."/>
            <person name="Spiegel L."/>
            <person name="Sekhon M."/>
            <person name="Murray J."/>
            <person name="Sheet P."/>
            <person name="Cordes M."/>
            <person name="Abu-Threideh J."/>
            <person name="Stoneking T."/>
            <person name="Kalicki J."/>
            <person name="Graves T."/>
            <person name="Harmon G."/>
            <person name="Edwards J."/>
            <person name="Latreille P."/>
            <person name="Courtney L."/>
            <person name="Cloud J."/>
            <person name="Abbott A."/>
            <person name="Scott K."/>
            <person name="Johnson D."/>
            <person name="Minx P."/>
            <person name="Bentley D."/>
            <person name="Fulton B."/>
            <person name="Miller N."/>
            <person name="Greco T."/>
            <person name="Kemp K."/>
            <person name="Kramer J."/>
            <person name="Fulton L."/>
            <person name="Mardis E."/>
            <person name="Dante M."/>
            <person name="Pepin K."/>
            <person name="Hillier L.W."/>
            <person name="Nelson J."/>
            <person name="Spieth J."/>
            <person name="Ryan E."/>
            <person name="Andrews S."/>
            <person name="Geisel C."/>
            <person name="Layman D."/>
            <person name="Du H."/>
            <person name="Ali J."/>
            <person name="Berghoff A."/>
            <person name="Jones K."/>
            <person name="Drone K."/>
            <person name="Cotton M."/>
            <person name="Joshu C."/>
            <person name="Antonoiu B."/>
            <person name="Zidanic M."/>
            <person name="Strong C."/>
            <person name="Sun H."/>
            <person name="Lamar B."/>
            <person name="Yordan C."/>
            <person name="Ma P."/>
            <person name="Zhong J."/>
            <person name="Preston R."/>
            <person name="Vil D."/>
            <person name="Shekher M."/>
            <person name="Matero A."/>
            <person name="Shah R."/>
            <person name="Swaby I.K."/>
            <person name="O'Shaughnessy A."/>
            <person name="Rodriguez M."/>
            <person name="Hoffman J."/>
            <person name="Till S."/>
            <person name="Granat S."/>
            <person name="Shohdy N."/>
            <person name="Hasegawa A."/>
            <person name="Hameed A."/>
            <person name="Lodhi M."/>
            <person name="Johnson A."/>
            <person name="Chen E."/>
            <person name="Marra M.A."/>
            <person name="Martienssen R."/>
            <person name="McCombie W.R."/>
        </authorList>
    </citation>
    <scope>NUCLEOTIDE SEQUENCE [LARGE SCALE GENOMIC DNA]</scope>
    <source>
        <strain>cv. Columbia</strain>
    </source>
</reference>
<reference key="2">
    <citation type="journal article" date="2017" name="Plant J.">
        <title>Araport11: a complete reannotation of the Arabidopsis thaliana reference genome.</title>
        <authorList>
            <person name="Cheng C.Y."/>
            <person name="Krishnakumar V."/>
            <person name="Chan A.P."/>
            <person name="Thibaud-Nissen F."/>
            <person name="Schobel S."/>
            <person name="Town C.D."/>
        </authorList>
    </citation>
    <scope>GENOME REANNOTATION</scope>
    <source>
        <strain>cv. Columbia</strain>
    </source>
</reference>
<reference key="3">
    <citation type="journal article" date="2003" name="Science">
        <title>Empirical analysis of transcriptional activity in the Arabidopsis genome.</title>
        <authorList>
            <person name="Yamada K."/>
            <person name="Lim J."/>
            <person name="Dale J.M."/>
            <person name="Chen H."/>
            <person name="Shinn P."/>
            <person name="Palm C.J."/>
            <person name="Southwick A.M."/>
            <person name="Wu H.C."/>
            <person name="Kim C.J."/>
            <person name="Nguyen M."/>
            <person name="Pham P.K."/>
            <person name="Cheuk R.F."/>
            <person name="Karlin-Newmann G."/>
            <person name="Liu S.X."/>
            <person name="Lam B."/>
            <person name="Sakano H."/>
            <person name="Wu T."/>
            <person name="Yu G."/>
            <person name="Miranda M."/>
            <person name="Quach H.L."/>
            <person name="Tripp M."/>
            <person name="Chang C.H."/>
            <person name="Lee J.M."/>
            <person name="Toriumi M.J."/>
            <person name="Chan M.M."/>
            <person name="Tang C.C."/>
            <person name="Onodera C.S."/>
            <person name="Deng J.M."/>
            <person name="Akiyama K."/>
            <person name="Ansari Y."/>
            <person name="Arakawa T."/>
            <person name="Banh J."/>
            <person name="Banno F."/>
            <person name="Bowser L."/>
            <person name="Brooks S.Y."/>
            <person name="Carninci P."/>
            <person name="Chao Q."/>
            <person name="Choy N."/>
            <person name="Enju A."/>
            <person name="Goldsmith A.D."/>
            <person name="Gurjal M."/>
            <person name="Hansen N.F."/>
            <person name="Hayashizaki Y."/>
            <person name="Johnson-Hopson C."/>
            <person name="Hsuan V.W."/>
            <person name="Iida K."/>
            <person name="Karnes M."/>
            <person name="Khan S."/>
            <person name="Koesema E."/>
            <person name="Ishida J."/>
            <person name="Jiang P.X."/>
            <person name="Jones T."/>
            <person name="Kawai J."/>
            <person name="Kamiya A."/>
            <person name="Meyers C."/>
            <person name="Nakajima M."/>
            <person name="Narusaka M."/>
            <person name="Seki M."/>
            <person name="Sakurai T."/>
            <person name="Satou M."/>
            <person name="Tamse R."/>
            <person name="Vaysberg M."/>
            <person name="Wallender E.K."/>
            <person name="Wong C."/>
            <person name="Yamamura Y."/>
            <person name="Yuan S."/>
            <person name="Shinozaki K."/>
            <person name="Davis R.W."/>
            <person name="Theologis A."/>
            <person name="Ecker J.R."/>
        </authorList>
    </citation>
    <scope>NUCLEOTIDE SEQUENCE [LARGE SCALE MRNA]</scope>
    <source>
        <strain>cv. Columbia</strain>
    </source>
</reference>
<reference key="4">
    <citation type="journal article" date="2001" name="Plant Physiol.">
        <title>A superfamily of proteins with novel cysteine-rich repeats.</title>
        <authorList>
            <person name="Chen Z."/>
        </authorList>
    </citation>
    <scope>GENE FAMILY ORGANIZATION</scope>
    <scope>NOMENCLATURE</scope>
</reference>
<comment type="catalytic activity">
    <reaction>
        <text>L-seryl-[protein] + ATP = O-phospho-L-seryl-[protein] + ADP + H(+)</text>
        <dbReference type="Rhea" id="RHEA:17989"/>
        <dbReference type="Rhea" id="RHEA-COMP:9863"/>
        <dbReference type="Rhea" id="RHEA-COMP:11604"/>
        <dbReference type="ChEBI" id="CHEBI:15378"/>
        <dbReference type="ChEBI" id="CHEBI:29999"/>
        <dbReference type="ChEBI" id="CHEBI:30616"/>
        <dbReference type="ChEBI" id="CHEBI:83421"/>
        <dbReference type="ChEBI" id="CHEBI:456216"/>
    </reaction>
</comment>
<comment type="catalytic activity">
    <reaction>
        <text>L-threonyl-[protein] + ATP = O-phospho-L-threonyl-[protein] + ADP + H(+)</text>
        <dbReference type="Rhea" id="RHEA:46608"/>
        <dbReference type="Rhea" id="RHEA-COMP:11060"/>
        <dbReference type="Rhea" id="RHEA-COMP:11605"/>
        <dbReference type="ChEBI" id="CHEBI:15378"/>
        <dbReference type="ChEBI" id="CHEBI:30013"/>
        <dbReference type="ChEBI" id="CHEBI:30616"/>
        <dbReference type="ChEBI" id="CHEBI:61977"/>
        <dbReference type="ChEBI" id="CHEBI:456216"/>
    </reaction>
</comment>
<comment type="subcellular location">
    <subcellularLocation>
        <location evidence="7">Membrane</location>
        <topology evidence="7">Single-pass membrane protein</topology>
    </subcellularLocation>
</comment>
<comment type="similarity">
    <text evidence="3">Belongs to the protein kinase superfamily. Ser/Thr protein kinase family. CRK subfamily.</text>
</comment>
<comment type="sequence caution" evidence="7">
    <conflict type="erroneous gene model prediction">
        <sequence resource="EMBL-CDS" id="CAA18705"/>
    </conflict>
</comment>
<comment type="sequence caution" evidence="7">
    <conflict type="erroneous gene model prediction">
        <sequence resource="EMBL-CDS" id="CAA20206"/>
    </conflict>
</comment>
<comment type="sequence caution" evidence="7">
    <conflict type="erroneous gene model prediction">
        <sequence resource="EMBL-CDS" id="CAB81248"/>
    </conflict>
</comment>
<organism>
    <name type="scientific">Arabidopsis thaliana</name>
    <name type="common">Mouse-ear cress</name>
    <dbReference type="NCBI Taxonomy" id="3702"/>
    <lineage>
        <taxon>Eukaryota</taxon>
        <taxon>Viridiplantae</taxon>
        <taxon>Streptophyta</taxon>
        <taxon>Embryophyta</taxon>
        <taxon>Tracheophyta</taxon>
        <taxon>Spermatophyta</taxon>
        <taxon>Magnoliopsida</taxon>
        <taxon>eudicotyledons</taxon>
        <taxon>Gunneridae</taxon>
        <taxon>Pentapetalae</taxon>
        <taxon>rosids</taxon>
        <taxon>malvids</taxon>
        <taxon>Brassicales</taxon>
        <taxon>Brassicaceae</taxon>
        <taxon>Camelineae</taxon>
        <taxon>Arabidopsis</taxon>
    </lineage>
</organism>
<name>CRK29_ARATH</name>
<feature type="signal peptide" evidence="2">
    <location>
        <begin position="1"/>
        <end position="23"/>
    </location>
</feature>
<feature type="chain" id="PRO_0000295076" description="Cysteine-rich receptor-like protein kinase 29">
    <location>
        <begin position="24"/>
        <end position="679"/>
    </location>
</feature>
<feature type="topological domain" description="Extracellular" evidence="2">
    <location>
        <begin position="24"/>
        <end position="286"/>
    </location>
</feature>
<feature type="transmembrane region" description="Helical" evidence="2">
    <location>
        <begin position="287"/>
        <end position="307"/>
    </location>
</feature>
<feature type="topological domain" description="Cytoplasmic" evidence="2">
    <location>
        <begin position="308"/>
        <end position="679"/>
    </location>
</feature>
<feature type="domain" description="Gnk2-homologous 1" evidence="4">
    <location>
        <begin position="30"/>
        <end position="134"/>
    </location>
</feature>
<feature type="domain" description="Gnk2-homologous 2" evidence="4">
    <location>
        <begin position="140"/>
        <end position="249"/>
    </location>
</feature>
<feature type="domain" description="Protein kinase" evidence="3">
    <location>
        <begin position="357"/>
        <end position="637"/>
    </location>
</feature>
<feature type="region of interest" description="Disordered" evidence="6">
    <location>
        <begin position="260"/>
        <end position="281"/>
    </location>
</feature>
<feature type="region of interest" description="Disordered" evidence="6">
    <location>
        <begin position="659"/>
        <end position="679"/>
    </location>
</feature>
<feature type="active site" description="Proton acceptor" evidence="3 5">
    <location>
        <position position="482"/>
    </location>
</feature>
<feature type="binding site" evidence="3">
    <location>
        <begin position="363"/>
        <end position="371"/>
    </location>
    <ligand>
        <name>ATP</name>
        <dbReference type="ChEBI" id="CHEBI:30616"/>
    </ligand>
</feature>
<feature type="binding site" evidence="3">
    <location>
        <position position="385"/>
    </location>
    <ligand>
        <name>ATP</name>
        <dbReference type="ChEBI" id="CHEBI:30616"/>
    </ligand>
</feature>
<feature type="modified residue" description="Phosphotyrosine" evidence="1">
    <location>
        <position position="430"/>
    </location>
</feature>
<feature type="modified residue" description="Phosphoserine" evidence="1">
    <location>
        <position position="486"/>
    </location>
</feature>
<feature type="modified residue" description="Phosphothreonine" evidence="1">
    <location>
        <position position="524"/>
    </location>
</feature>
<feature type="modified residue" description="Phosphotyrosine" evidence="1">
    <location>
        <position position="532"/>
    </location>
</feature>
<feature type="glycosylation site" description="N-linked (GlcNAc...) asparagine" evidence="2">
    <location>
        <position position="41"/>
    </location>
</feature>
<feature type="glycosylation site" description="N-linked (GlcNAc...) asparagine" evidence="2">
    <location>
        <position position="45"/>
    </location>
</feature>
<feature type="glycosylation site" description="N-linked (GlcNAc...) asparagine" evidence="2">
    <location>
        <position position="71"/>
    </location>
</feature>
<feature type="glycosylation site" description="N-linked (GlcNAc...) asparagine" evidence="2">
    <location>
        <position position="107"/>
    </location>
</feature>
<feature type="glycosylation site" description="N-linked (GlcNAc...) asparagine" evidence="2">
    <location>
        <position position="131"/>
    </location>
</feature>
<feature type="glycosylation site" description="N-linked (GlcNAc...) asparagine" evidence="2">
    <location>
        <position position="187"/>
    </location>
</feature>
<keyword id="KW-0067">ATP-binding</keyword>
<keyword id="KW-0325">Glycoprotein</keyword>
<keyword id="KW-0418">Kinase</keyword>
<keyword id="KW-0472">Membrane</keyword>
<keyword id="KW-0547">Nucleotide-binding</keyword>
<keyword id="KW-0597">Phosphoprotein</keyword>
<keyword id="KW-0675">Receptor</keyword>
<keyword id="KW-1185">Reference proteome</keyword>
<keyword id="KW-0677">Repeat</keyword>
<keyword id="KW-0723">Serine/threonine-protein kinase</keyword>
<keyword id="KW-0732">Signal</keyword>
<keyword id="KW-0808">Transferase</keyword>
<keyword id="KW-0812">Transmembrane</keyword>
<keyword id="KW-1133">Transmembrane helix</keyword>
<protein>
    <recommendedName>
        <fullName>Cysteine-rich receptor-like protein kinase 29</fullName>
        <shortName>Cysteine-rich RLK29</shortName>
        <ecNumber>2.7.11.-</ecNumber>
    </recommendedName>
</protein>
<evidence type="ECO:0000250" key="1">
    <source>
        <dbReference type="UniProtKB" id="O48814"/>
    </source>
</evidence>
<evidence type="ECO:0000255" key="2"/>
<evidence type="ECO:0000255" key="3">
    <source>
        <dbReference type="PROSITE-ProRule" id="PRU00159"/>
    </source>
</evidence>
<evidence type="ECO:0000255" key="4">
    <source>
        <dbReference type="PROSITE-ProRule" id="PRU00806"/>
    </source>
</evidence>
<evidence type="ECO:0000255" key="5">
    <source>
        <dbReference type="PROSITE-ProRule" id="PRU10027"/>
    </source>
</evidence>
<evidence type="ECO:0000256" key="6">
    <source>
        <dbReference type="SAM" id="MobiDB-lite"/>
    </source>
</evidence>
<evidence type="ECO:0000305" key="7"/>
<dbReference type="EC" id="2.7.11.-"/>
<dbReference type="EMBL" id="AL022603">
    <property type="protein sequence ID" value="CAA18705.1"/>
    <property type="status" value="ALT_SEQ"/>
    <property type="molecule type" value="Genomic_DNA"/>
</dbReference>
<dbReference type="EMBL" id="AL031187">
    <property type="protein sequence ID" value="CAA20206.1"/>
    <property type="status" value="ALT_SEQ"/>
    <property type="molecule type" value="Genomic_DNA"/>
</dbReference>
<dbReference type="EMBL" id="AL161555">
    <property type="protein sequence ID" value="CAB81248.1"/>
    <property type="status" value="ALT_SEQ"/>
    <property type="molecule type" value="Genomic_DNA"/>
</dbReference>
<dbReference type="EMBL" id="CP002687">
    <property type="protein sequence ID" value="ANM68027.1"/>
    <property type="molecule type" value="Genomic_DNA"/>
</dbReference>
<dbReference type="EMBL" id="AY074844">
    <property type="protein sequence ID" value="AAL75897.1"/>
    <property type="molecule type" value="mRNA"/>
</dbReference>
<dbReference type="PIR" id="T05149">
    <property type="entry name" value="T05149"/>
</dbReference>
<dbReference type="RefSeq" id="NP_193872.2">
    <property type="nucleotide sequence ID" value="NM_118261.4"/>
</dbReference>
<dbReference type="SMR" id="Q8S9L6"/>
<dbReference type="BioGRID" id="13184">
    <property type="interactions" value="1"/>
</dbReference>
<dbReference type="FunCoup" id="Q8S9L6">
    <property type="interactions" value="116"/>
</dbReference>
<dbReference type="STRING" id="3702.Q8S9L6"/>
<dbReference type="GlyCosmos" id="Q8S9L6">
    <property type="glycosylation" value="6 sites, No reported glycans"/>
</dbReference>
<dbReference type="GlyGen" id="Q8S9L6">
    <property type="glycosylation" value="6 sites"/>
</dbReference>
<dbReference type="PaxDb" id="3702-AT4G21410.1"/>
<dbReference type="ProteomicsDB" id="224550"/>
<dbReference type="EnsemblPlants" id="AT4G21410.3">
    <property type="protein sequence ID" value="AT4G21410.3"/>
    <property type="gene ID" value="AT4G21410"/>
</dbReference>
<dbReference type="GeneID" id="827893"/>
<dbReference type="Gramene" id="AT4G21410.3">
    <property type="protein sequence ID" value="AT4G21410.3"/>
    <property type="gene ID" value="AT4G21410"/>
</dbReference>
<dbReference type="KEGG" id="ath:AT4G21410"/>
<dbReference type="Araport" id="AT4G21410"/>
<dbReference type="TAIR" id="AT4G21410">
    <property type="gene designation" value="CRK29"/>
</dbReference>
<dbReference type="eggNOG" id="ENOG502QWDY">
    <property type="taxonomic scope" value="Eukaryota"/>
</dbReference>
<dbReference type="HOGENOM" id="CLU_000288_35_2_1"/>
<dbReference type="InParanoid" id="Q8S9L6"/>
<dbReference type="PhylomeDB" id="Q8S9L6"/>
<dbReference type="PRO" id="PR:Q8S9L6"/>
<dbReference type="Proteomes" id="UP000006548">
    <property type="component" value="Chromosome 4"/>
</dbReference>
<dbReference type="ExpressionAtlas" id="Q8S9L6">
    <property type="expression patterns" value="baseline and differential"/>
</dbReference>
<dbReference type="GO" id="GO:0016020">
    <property type="term" value="C:membrane"/>
    <property type="evidence" value="ECO:0007669"/>
    <property type="project" value="UniProtKB-SubCell"/>
</dbReference>
<dbReference type="GO" id="GO:0005773">
    <property type="term" value="C:vacuole"/>
    <property type="evidence" value="ECO:0007005"/>
    <property type="project" value="TAIR"/>
</dbReference>
<dbReference type="GO" id="GO:0005524">
    <property type="term" value="F:ATP binding"/>
    <property type="evidence" value="ECO:0007669"/>
    <property type="project" value="UniProtKB-KW"/>
</dbReference>
<dbReference type="GO" id="GO:0106310">
    <property type="term" value="F:protein serine kinase activity"/>
    <property type="evidence" value="ECO:0007669"/>
    <property type="project" value="RHEA"/>
</dbReference>
<dbReference type="GO" id="GO:0004674">
    <property type="term" value="F:protein serine/threonine kinase activity"/>
    <property type="evidence" value="ECO:0007669"/>
    <property type="project" value="UniProtKB-KW"/>
</dbReference>
<dbReference type="GO" id="GO:0009737">
    <property type="term" value="P:response to abscisic acid"/>
    <property type="evidence" value="ECO:0000270"/>
    <property type="project" value="TAIR"/>
</dbReference>
<dbReference type="CDD" id="cd23509">
    <property type="entry name" value="Gnk2-like"/>
    <property type="match status" value="2"/>
</dbReference>
<dbReference type="CDD" id="cd14066">
    <property type="entry name" value="STKc_IRAK"/>
    <property type="match status" value="1"/>
</dbReference>
<dbReference type="FunFam" id="3.30.200.20:FF:000142">
    <property type="entry name" value="Cysteine-rich receptor-like protein kinase 10"/>
    <property type="match status" value="1"/>
</dbReference>
<dbReference type="FunFam" id="3.30.430.20:FF:000002">
    <property type="entry name" value="Cysteine-rich receptor-like protein kinase 10"/>
    <property type="match status" value="1"/>
</dbReference>
<dbReference type="FunFam" id="1.10.510.10:FF:000343">
    <property type="entry name" value="Cysteine-rich receptor-like protein kinase 28"/>
    <property type="match status" value="1"/>
</dbReference>
<dbReference type="FunFam" id="3.30.430.20:FF:000009">
    <property type="entry name" value="Cysteine-rich receptor-like protein kinase 28"/>
    <property type="match status" value="1"/>
</dbReference>
<dbReference type="Gene3D" id="3.30.430.20">
    <property type="entry name" value="Gnk2 domain, C-X8-C-X2-C motif"/>
    <property type="match status" value="2"/>
</dbReference>
<dbReference type="Gene3D" id="3.30.200.20">
    <property type="entry name" value="Phosphorylase Kinase, domain 1"/>
    <property type="match status" value="1"/>
</dbReference>
<dbReference type="Gene3D" id="1.10.510.10">
    <property type="entry name" value="Transferase(Phosphotransferase) domain 1"/>
    <property type="match status" value="1"/>
</dbReference>
<dbReference type="InterPro" id="IPR002902">
    <property type="entry name" value="GNK2"/>
</dbReference>
<dbReference type="InterPro" id="IPR038408">
    <property type="entry name" value="GNK2_sf"/>
</dbReference>
<dbReference type="InterPro" id="IPR011009">
    <property type="entry name" value="Kinase-like_dom_sf"/>
</dbReference>
<dbReference type="InterPro" id="IPR000719">
    <property type="entry name" value="Prot_kinase_dom"/>
</dbReference>
<dbReference type="InterPro" id="IPR017441">
    <property type="entry name" value="Protein_kinase_ATP_BS"/>
</dbReference>
<dbReference type="InterPro" id="IPR001245">
    <property type="entry name" value="Ser-Thr/Tyr_kinase_cat_dom"/>
</dbReference>
<dbReference type="InterPro" id="IPR008271">
    <property type="entry name" value="Ser/Thr_kinase_AS"/>
</dbReference>
<dbReference type="PANTHER" id="PTHR27002:SF1091">
    <property type="entry name" value="CYSTEINE-RICH RECEPTOR-LIKE PROTEIN KINASE 28-RELATED"/>
    <property type="match status" value="1"/>
</dbReference>
<dbReference type="PANTHER" id="PTHR27002">
    <property type="entry name" value="RECEPTOR-LIKE SERINE/THREONINE-PROTEIN KINASE SD1-8"/>
    <property type="match status" value="1"/>
</dbReference>
<dbReference type="Pfam" id="PF07714">
    <property type="entry name" value="PK_Tyr_Ser-Thr"/>
    <property type="match status" value="1"/>
</dbReference>
<dbReference type="Pfam" id="PF01657">
    <property type="entry name" value="Stress-antifung"/>
    <property type="match status" value="2"/>
</dbReference>
<dbReference type="SMART" id="SM00220">
    <property type="entry name" value="S_TKc"/>
    <property type="match status" value="1"/>
</dbReference>
<dbReference type="SUPFAM" id="SSF56112">
    <property type="entry name" value="Protein kinase-like (PK-like)"/>
    <property type="match status" value="1"/>
</dbReference>
<dbReference type="PROSITE" id="PS51473">
    <property type="entry name" value="GNK2"/>
    <property type="match status" value="2"/>
</dbReference>
<dbReference type="PROSITE" id="PS00107">
    <property type="entry name" value="PROTEIN_KINASE_ATP"/>
    <property type="match status" value="1"/>
</dbReference>
<dbReference type="PROSITE" id="PS50011">
    <property type="entry name" value="PROTEIN_KINASE_DOM"/>
    <property type="match status" value="1"/>
</dbReference>
<dbReference type="PROSITE" id="PS00108">
    <property type="entry name" value="PROTEIN_KINASE_ST"/>
    <property type="match status" value="1"/>
</dbReference>
<accession>Q8S9L6</accession>
<accession>O65406</accession>
<proteinExistence type="evidence at transcript level"/>
<sequence length="679" mass="75720">MEHVRVIFFFACFLTLAPFHAFAQVDSYEFDPDFNCVDRGNFTANSTFAGNLNRLVSSLSSLKSQAYGFYNLSSGDSSGERAYAIGLCRREVKRDDCVSCIQTAARNLTKQCPLTKQAVVWYTHCMFRYSNRTIYGRKETNPTKAFIAGEEISANRDDFERLQRGLLDRLKGIAAAGGPNRKYAQGNGSASAGYRRFYGTVQCTPDLSEQDCNDCLVFGFENIPSCCDAEIGLRWFSPSCNFRFETWRFYEFDADLEPDPPAIQPADSPQSAARTERTGKGKGGSKVIIAIVIPILLVALLAICLCLVLKWRKNKSGYKNKVLGKSPLSGSIAEDEFSNTESLLVHFETLKTATDNFSSENELGRGGFGSVYKGVFPQGQEIAVKRLSGNSGQGDNEFKNEILLLAKLQHRNLVRLIGFCIQGEERLLVYEFIKNASLDQFIFDTEKRQLLDWVVRYKMIGGIARGLLYLHEDSRFRIIHRDLKASNILLDQEMNPKIADFGLAKLFDSGQTMTHRFTSRIAGTYGYMAPEYAMHGQFSVKTDVFSFGVLVIEIITGKRNNNGGSNGDEDAEDLLSWVWRSWREDTILSVIDPSLTAGSRNEILRCIHIGLLCVQESAATRPTMATVSLMLNSYSFTLPTPLRPAFVLESVVIPSNVSSSTEGLQMSSNDVTVSEFSPR</sequence>